<dbReference type="EMBL" id="Z97731">
    <property type="protein sequence ID" value="CAB10748.1"/>
    <property type="status" value="ALT_FRAME"/>
    <property type="molecule type" value="mRNA"/>
</dbReference>
<dbReference type="FunCoup" id="O19177">
    <property type="interactions" value="328"/>
</dbReference>
<dbReference type="STRING" id="9615.ENSCAFP00000027605"/>
<dbReference type="PaxDb" id="9612-ENSCAFP00000027605"/>
<dbReference type="eggNOG" id="KOG4037">
    <property type="taxonomic scope" value="Eukaryota"/>
</dbReference>
<dbReference type="InParanoid" id="O19177"/>
<dbReference type="OrthoDB" id="10248777at2759"/>
<dbReference type="Proteomes" id="UP000002254">
    <property type="component" value="Unplaced"/>
</dbReference>
<dbReference type="Proteomes" id="UP000694429">
    <property type="component" value="Unplaced"/>
</dbReference>
<dbReference type="Proteomes" id="UP000694542">
    <property type="component" value="Unplaced"/>
</dbReference>
<dbReference type="Proteomes" id="UP000805418">
    <property type="component" value="Unplaced"/>
</dbReference>
<dbReference type="GO" id="GO:0005813">
    <property type="term" value="C:centrosome"/>
    <property type="evidence" value="ECO:0000250"/>
    <property type="project" value="UniProtKB"/>
</dbReference>
<dbReference type="GO" id="GO:0005737">
    <property type="term" value="C:cytoplasm"/>
    <property type="evidence" value="ECO:0007669"/>
    <property type="project" value="UniProtKB-KW"/>
</dbReference>
<dbReference type="GO" id="GO:0045171">
    <property type="term" value="C:intercellular bridge"/>
    <property type="evidence" value="ECO:0000250"/>
    <property type="project" value="UniProtKB"/>
</dbReference>
<dbReference type="GO" id="GO:0051233">
    <property type="term" value="C:spindle midzone"/>
    <property type="evidence" value="ECO:0000250"/>
    <property type="project" value="UniProtKB"/>
</dbReference>
<dbReference type="GO" id="GO:0000922">
    <property type="term" value="C:spindle pole"/>
    <property type="evidence" value="ECO:0000250"/>
    <property type="project" value="UniProtKB"/>
</dbReference>
<dbReference type="GO" id="GO:0008289">
    <property type="term" value="F:lipid binding"/>
    <property type="evidence" value="ECO:0000250"/>
    <property type="project" value="UniProtKB"/>
</dbReference>
<dbReference type="GO" id="GO:0006897">
    <property type="term" value="P:endocytosis"/>
    <property type="evidence" value="ECO:0007669"/>
    <property type="project" value="UniProtKB-KW"/>
</dbReference>
<dbReference type="GO" id="GO:0042953">
    <property type="term" value="P:lipoprotein transport"/>
    <property type="evidence" value="ECO:0000250"/>
    <property type="project" value="UniProtKB"/>
</dbReference>
<dbReference type="GO" id="GO:0000281">
    <property type="term" value="P:mitotic cytokinesis"/>
    <property type="evidence" value="ECO:0000250"/>
    <property type="project" value="UniProtKB"/>
</dbReference>
<dbReference type="GO" id="GO:2001287">
    <property type="term" value="P:negative regulation of caveolin-mediated endocytosis"/>
    <property type="evidence" value="ECO:0000250"/>
    <property type="project" value="UniProtKB"/>
</dbReference>
<dbReference type="GO" id="GO:1900186">
    <property type="term" value="P:negative regulation of clathrin-dependent endocytosis"/>
    <property type="evidence" value="ECO:0000250"/>
    <property type="project" value="UniProtKB"/>
</dbReference>
<dbReference type="GO" id="GO:0007399">
    <property type="term" value="P:nervous system development"/>
    <property type="evidence" value="ECO:0000318"/>
    <property type="project" value="GO_Central"/>
</dbReference>
<dbReference type="GO" id="GO:0007601">
    <property type="term" value="P:visual perception"/>
    <property type="evidence" value="ECO:0007669"/>
    <property type="project" value="UniProtKB-KW"/>
</dbReference>
<dbReference type="FunFam" id="2.70.50.40:FF:000001">
    <property type="entry name" value="protein unc-119 homolog A"/>
    <property type="match status" value="1"/>
</dbReference>
<dbReference type="Gene3D" id="2.70.50.40">
    <property type="entry name" value="GMP phosphodiesterase, delta subunit"/>
    <property type="match status" value="1"/>
</dbReference>
<dbReference type="InterPro" id="IPR014756">
    <property type="entry name" value="Ig_E-set"/>
</dbReference>
<dbReference type="InterPro" id="IPR051519">
    <property type="entry name" value="PDE6D_unc-119_myristoyl-bd"/>
</dbReference>
<dbReference type="InterPro" id="IPR008015">
    <property type="entry name" value="PDED_dom"/>
</dbReference>
<dbReference type="InterPro" id="IPR037036">
    <property type="entry name" value="PDED_dom_sf"/>
</dbReference>
<dbReference type="PANTHER" id="PTHR12951:SF5">
    <property type="entry name" value="PROTEIN UNC-119 HOMOLOG A"/>
    <property type="match status" value="1"/>
</dbReference>
<dbReference type="PANTHER" id="PTHR12951">
    <property type="entry name" value="RETINAL PROTEIN 4"/>
    <property type="match status" value="1"/>
</dbReference>
<dbReference type="Pfam" id="PF05351">
    <property type="entry name" value="GMP_PDE_delta"/>
    <property type="match status" value="1"/>
</dbReference>
<dbReference type="SUPFAM" id="SSF81296">
    <property type="entry name" value="E set domains"/>
    <property type="match status" value="1"/>
</dbReference>
<protein>
    <recommendedName>
        <fullName>Protein unc-119 homolog A</fullName>
    </recommendedName>
    <alternativeName>
        <fullName>CRG4</fullName>
    </alternativeName>
    <alternativeName>
        <fullName>Retinal protein 4</fullName>
    </alternativeName>
</protein>
<feature type="chain" id="PRO_0000221211" description="Protein unc-119 homolog A">
    <location>
        <begin position="1"/>
        <end position="240"/>
    </location>
</feature>
<feature type="region of interest" description="Disordered" evidence="4">
    <location>
        <begin position="1"/>
        <end position="61"/>
    </location>
</feature>
<feature type="compositionally biased region" description="Gly residues" evidence="4">
    <location>
        <begin position="1"/>
        <end position="12"/>
    </location>
</feature>
<feature type="compositionally biased region" description="Low complexity" evidence="4">
    <location>
        <begin position="13"/>
        <end position="23"/>
    </location>
</feature>
<feature type="binding site" evidence="1">
    <location>
        <position position="131"/>
    </location>
    <ligand>
        <name>tetradecanoate</name>
        <dbReference type="ChEBI" id="CHEBI:30807"/>
    </ligand>
</feature>
<feature type="modified residue" description="Phosphoserine; by CK2" evidence="3">
    <location>
        <position position="37"/>
    </location>
</feature>
<feature type="modified residue" description="Phosphoserine; by CK2" evidence="3">
    <location>
        <position position="39"/>
    </location>
</feature>
<feature type="modified residue" description="Phosphoserine; by CK2" evidence="3">
    <location>
        <position position="41"/>
    </location>
</feature>
<feature type="sequence conflict" description="In Ref. 2; CAB10748." evidence="5" ref="2">
    <original>AT</original>
    <variation>VR</variation>
    <location>
        <begin position="145"/>
        <end position="146"/>
    </location>
</feature>
<comment type="function">
    <text evidence="2 3">Involved in synaptic functions in photoreceptor cells, the signal transduction in immune cells as a Src family kinase activator, endosome recycling, the uptake of bacteria and endocytosis, protein trafficking in sensory neurons and as lipid-binding chaperone with specificity for a diverse subset of myristoylated proteins. Specifically binds the myristoyl moiety of a subset of N-terminally myristoylated proteins and is required for their localization. Binds myristoylated GNAT1 and is required for G-protein localization and trafficking in sensory neurons. Probably plays a role in trafficking proteins in photoreceptor cells. Plays important roles in mediating Src family kinase signals for the completion of cytokinesis via RAB11A (By similarity).</text>
</comment>
<comment type="subunit">
    <text evidence="2 3">Interacts with CABP4; in the absence of calcium. May interact with GTP-bound ARL1. Interacts with ARL2 and ARL3 (GTP-bound forms); this promotes the release of myristoylated cargo proteins (By similarity). Found in a complex with ARL3, RP2 and UNC119; RP2 induces hydrolysis of GTP ARL3 in the complex, leading to the release of UNC119. Interacts with NPHP3 (when myristoylated). Interacts with CYS1 (when myristoylated). Interacts with MACIR; interaction only takes place when UNC119 is not liganded with myristoylated proteins (By similarity). Interacts with LCK; this interaction plays a crucial role in activation of LCK (By similarity). Interacts with FYN (By similarity). Interacts with RAB11A; in a cell cycle-dependent manner (By similarity). Interacts with LYN (via SH2 and SH3 domains); leading to LYN activation (By similarity). Interacts with DNM1; leading to a decrease of DNM1 GTPase activity (By similarity). Found in a complex with ABL1, ABL2, CRK and UNC119; leading to the inhibition of CRK phosphorylation by ABL kinases (By similarity). Interacts with CD44 (By similarity). Interacts with KLHL18 (via kelch repeats) (By similarity). Interacts with PPP3CA, PPP3CB and PPP3CC (By similarity). Interacts with USP48; this interaction promotes UNC119 stability (By similarity).</text>
</comment>
<comment type="subcellular location">
    <subcellularLocation>
        <location evidence="2">Cytoplasm</location>
        <location evidence="2">Cytoskeleton</location>
        <location evidence="2">Microtubule organizing center</location>
        <location evidence="2">Centrosome</location>
    </subcellularLocation>
    <subcellularLocation>
        <location evidence="2">Cytoplasm</location>
        <location evidence="2">Cytoskeleton</location>
        <location evidence="2">Spindle</location>
    </subcellularLocation>
    <subcellularLocation>
        <location evidence="2">Cytoplasm</location>
        <location evidence="2">Cytoskeleton</location>
        <location evidence="2">Spindle pole</location>
    </subcellularLocation>
    <text evidence="2">ocalizes to the centrosome in interphase cells and begins to translocate from the spindle pole to the spindle midzone after the onset of mitosis; it then localizes to the intercellular bridge in telophase cells and to the midbody in cytokinetic cells.</text>
</comment>
<comment type="domain">
    <text evidence="2">Adopts an immunoglobulin-like beta-sandwich fold forming a hydrophobic cavity that captures N-terminally myristoylated target peptides. Phe residues within the hydrophobic beta sandwich are required for myristate binding (By similarity).</text>
</comment>
<comment type="PTM">
    <text evidence="3">Phosphorylation suppresses its interaction with KLHL18 and down-regulates its KLHL18-mediated degradation. Phosphorylated more under light conditions than dark conditions. Dephosphorylated by calcineurin.</text>
</comment>
<comment type="similarity">
    <text evidence="5">Belongs to the PDE6D/unc-119 family.</text>
</comment>
<comment type="sequence caution" evidence="5">
    <conflict type="frameshift">
        <sequence resource="EMBL-CDS" id="CAB10748"/>
    </conflict>
</comment>
<name>U119A_CANLF</name>
<accession>O19177</accession>
<proteinExistence type="evidence at transcript level"/>
<sequence length="240" mass="27062">MKVKKGGGGAGTGAEPASGAPGPSVEPKPEPQAESESGSESEPEAGPGPRPGPLQRKQRIGPEDVLGLQRITGDYLCSPEENIYKIDFIRFKIRDMDSGTVLFEIKKPPASERLPINRRDLDPNAGRFVRYQFTPAFLRLRQVGATVEFTVGDKPVNNFRMIERHYFRNQLLKSFDFHFGFCIPSSKNTCEHIYDFPPLSEELINEMIRHPYETQSDSFYFVDDRLVMHNKADYSYSGTP</sequence>
<evidence type="ECO:0000250" key="1"/>
<evidence type="ECO:0000250" key="2">
    <source>
        <dbReference type="UniProtKB" id="Q13432"/>
    </source>
</evidence>
<evidence type="ECO:0000250" key="3">
    <source>
        <dbReference type="UniProtKB" id="Q9Z2R6"/>
    </source>
</evidence>
<evidence type="ECO:0000256" key="4">
    <source>
        <dbReference type="SAM" id="MobiDB-lite"/>
    </source>
</evidence>
<evidence type="ECO:0000305" key="5"/>
<gene>
    <name type="primary">UNC119</name>
    <name type="synonym">RG4</name>
</gene>
<organism>
    <name type="scientific">Canis lupus familiaris</name>
    <name type="common">Dog</name>
    <name type="synonym">Canis familiaris</name>
    <dbReference type="NCBI Taxonomy" id="9615"/>
    <lineage>
        <taxon>Eukaryota</taxon>
        <taxon>Metazoa</taxon>
        <taxon>Chordata</taxon>
        <taxon>Craniata</taxon>
        <taxon>Vertebrata</taxon>
        <taxon>Euteleostomi</taxon>
        <taxon>Mammalia</taxon>
        <taxon>Eutheria</taxon>
        <taxon>Laurasiatheria</taxon>
        <taxon>Carnivora</taxon>
        <taxon>Caniformia</taxon>
        <taxon>Canidae</taxon>
        <taxon>Canis</taxon>
    </lineage>
</organism>
<keyword id="KW-0963">Cytoplasm</keyword>
<keyword id="KW-0206">Cytoskeleton</keyword>
<keyword id="KW-0254">Endocytosis</keyword>
<keyword id="KW-0446">Lipid-binding</keyword>
<keyword id="KW-0597">Phosphoprotein</keyword>
<keyword id="KW-0653">Protein transport</keyword>
<keyword id="KW-1185">Reference proteome</keyword>
<keyword id="KW-0716">Sensory transduction</keyword>
<keyword id="KW-0813">Transport</keyword>
<keyword id="KW-0844">Vision</keyword>
<reference key="1">
    <citation type="journal article" date="2005" name="Nature">
        <title>Genome sequence, comparative analysis and haplotype structure of the domestic dog.</title>
        <authorList>
            <person name="Lindblad-Toh K."/>
            <person name="Wade C.M."/>
            <person name="Mikkelsen T.S."/>
            <person name="Karlsson E.K."/>
            <person name="Jaffe D.B."/>
            <person name="Kamal M."/>
            <person name="Clamp M."/>
            <person name="Chang J.L."/>
            <person name="Kulbokas E.J. III"/>
            <person name="Zody M.C."/>
            <person name="Mauceli E."/>
            <person name="Xie X."/>
            <person name="Breen M."/>
            <person name="Wayne R.K."/>
            <person name="Ostrander E.A."/>
            <person name="Ponting C.P."/>
            <person name="Galibert F."/>
            <person name="Smith D.R."/>
            <person name="deJong P.J."/>
            <person name="Kirkness E.F."/>
            <person name="Alvarez P."/>
            <person name="Biagi T."/>
            <person name="Brockman W."/>
            <person name="Butler J."/>
            <person name="Chin C.-W."/>
            <person name="Cook A."/>
            <person name="Cuff J."/>
            <person name="Daly M.J."/>
            <person name="DeCaprio D."/>
            <person name="Gnerre S."/>
            <person name="Grabherr M."/>
            <person name="Kellis M."/>
            <person name="Kleber M."/>
            <person name="Bardeleben C."/>
            <person name="Goodstadt L."/>
            <person name="Heger A."/>
            <person name="Hitte C."/>
            <person name="Kim L."/>
            <person name="Koepfli K.-P."/>
            <person name="Parker H.G."/>
            <person name="Pollinger J.P."/>
            <person name="Searle S.M.J."/>
            <person name="Sutter N.B."/>
            <person name="Thomas R."/>
            <person name="Webber C."/>
            <person name="Baldwin J."/>
            <person name="Abebe A."/>
            <person name="Abouelleil A."/>
            <person name="Aftuck L."/>
            <person name="Ait-Zahra M."/>
            <person name="Aldredge T."/>
            <person name="Allen N."/>
            <person name="An P."/>
            <person name="Anderson S."/>
            <person name="Antoine C."/>
            <person name="Arachchi H."/>
            <person name="Aslam A."/>
            <person name="Ayotte L."/>
            <person name="Bachantsang P."/>
            <person name="Barry A."/>
            <person name="Bayul T."/>
            <person name="Benamara M."/>
            <person name="Berlin A."/>
            <person name="Bessette D."/>
            <person name="Blitshteyn B."/>
            <person name="Bloom T."/>
            <person name="Blye J."/>
            <person name="Boguslavskiy L."/>
            <person name="Bonnet C."/>
            <person name="Boukhgalter B."/>
            <person name="Brown A."/>
            <person name="Cahill P."/>
            <person name="Calixte N."/>
            <person name="Camarata J."/>
            <person name="Cheshatsang Y."/>
            <person name="Chu J."/>
            <person name="Citroen M."/>
            <person name="Collymore A."/>
            <person name="Cooke P."/>
            <person name="Dawoe T."/>
            <person name="Daza R."/>
            <person name="Decktor K."/>
            <person name="DeGray S."/>
            <person name="Dhargay N."/>
            <person name="Dooley K."/>
            <person name="Dooley K."/>
            <person name="Dorje P."/>
            <person name="Dorjee K."/>
            <person name="Dorris L."/>
            <person name="Duffey N."/>
            <person name="Dupes A."/>
            <person name="Egbiremolen O."/>
            <person name="Elong R."/>
            <person name="Falk J."/>
            <person name="Farina A."/>
            <person name="Faro S."/>
            <person name="Ferguson D."/>
            <person name="Ferreira P."/>
            <person name="Fisher S."/>
            <person name="FitzGerald M."/>
            <person name="Foley K."/>
            <person name="Foley C."/>
            <person name="Franke A."/>
            <person name="Friedrich D."/>
            <person name="Gage D."/>
            <person name="Garber M."/>
            <person name="Gearin G."/>
            <person name="Giannoukos G."/>
            <person name="Goode T."/>
            <person name="Goyette A."/>
            <person name="Graham J."/>
            <person name="Grandbois E."/>
            <person name="Gyaltsen K."/>
            <person name="Hafez N."/>
            <person name="Hagopian D."/>
            <person name="Hagos B."/>
            <person name="Hall J."/>
            <person name="Healy C."/>
            <person name="Hegarty R."/>
            <person name="Honan T."/>
            <person name="Horn A."/>
            <person name="Houde N."/>
            <person name="Hughes L."/>
            <person name="Hunnicutt L."/>
            <person name="Husby M."/>
            <person name="Jester B."/>
            <person name="Jones C."/>
            <person name="Kamat A."/>
            <person name="Kanga B."/>
            <person name="Kells C."/>
            <person name="Khazanovich D."/>
            <person name="Kieu A.C."/>
            <person name="Kisner P."/>
            <person name="Kumar M."/>
            <person name="Lance K."/>
            <person name="Landers T."/>
            <person name="Lara M."/>
            <person name="Lee W."/>
            <person name="Leger J.-P."/>
            <person name="Lennon N."/>
            <person name="Leuper L."/>
            <person name="LeVine S."/>
            <person name="Liu J."/>
            <person name="Liu X."/>
            <person name="Lokyitsang Y."/>
            <person name="Lokyitsang T."/>
            <person name="Lui A."/>
            <person name="Macdonald J."/>
            <person name="Major J."/>
            <person name="Marabella R."/>
            <person name="Maru K."/>
            <person name="Matthews C."/>
            <person name="McDonough S."/>
            <person name="Mehta T."/>
            <person name="Meldrim J."/>
            <person name="Melnikov A."/>
            <person name="Meneus L."/>
            <person name="Mihalev A."/>
            <person name="Mihova T."/>
            <person name="Miller K."/>
            <person name="Mittelman R."/>
            <person name="Mlenga V."/>
            <person name="Mulrain L."/>
            <person name="Munson G."/>
            <person name="Navidi A."/>
            <person name="Naylor J."/>
            <person name="Nguyen T."/>
            <person name="Nguyen N."/>
            <person name="Nguyen C."/>
            <person name="Nguyen T."/>
            <person name="Nicol R."/>
            <person name="Norbu N."/>
            <person name="Norbu C."/>
            <person name="Novod N."/>
            <person name="Nyima T."/>
            <person name="Olandt P."/>
            <person name="O'Neill B."/>
            <person name="O'Neill K."/>
            <person name="Osman S."/>
            <person name="Oyono L."/>
            <person name="Patti C."/>
            <person name="Perrin D."/>
            <person name="Phunkhang P."/>
            <person name="Pierre F."/>
            <person name="Priest M."/>
            <person name="Rachupka A."/>
            <person name="Raghuraman S."/>
            <person name="Rameau R."/>
            <person name="Ray V."/>
            <person name="Raymond C."/>
            <person name="Rege F."/>
            <person name="Rise C."/>
            <person name="Rogers J."/>
            <person name="Rogov P."/>
            <person name="Sahalie J."/>
            <person name="Settipalli S."/>
            <person name="Sharpe T."/>
            <person name="Shea T."/>
            <person name="Sheehan M."/>
            <person name="Sherpa N."/>
            <person name="Shi J."/>
            <person name="Shih D."/>
            <person name="Sloan J."/>
            <person name="Smith C."/>
            <person name="Sparrow T."/>
            <person name="Stalker J."/>
            <person name="Stange-Thomann N."/>
            <person name="Stavropoulos S."/>
            <person name="Stone C."/>
            <person name="Stone S."/>
            <person name="Sykes S."/>
            <person name="Tchuinga P."/>
            <person name="Tenzing P."/>
            <person name="Tesfaye S."/>
            <person name="Thoulutsang D."/>
            <person name="Thoulutsang Y."/>
            <person name="Topham K."/>
            <person name="Topping I."/>
            <person name="Tsamla T."/>
            <person name="Vassiliev H."/>
            <person name="Venkataraman V."/>
            <person name="Vo A."/>
            <person name="Wangchuk T."/>
            <person name="Wangdi T."/>
            <person name="Weiand M."/>
            <person name="Wilkinson J."/>
            <person name="Wilson A."/>
            <person name="Yadav S."/>
            <person name="Yang S."/>
            <person name="Yang X."/>
            <person name="Young G."/>
            <person name="Yu Q."/>
            <person name="Zainoun J."/>
            <person name="Zembek L."/>
            <person name="Zimmer A."/>
            <person name="Lander E.S."/>
        </authorList>
    </citation>
    <scope>NUCLEOTIDE SEQUENCE [LARGE SCALE GENOMIC DNA]</scope>
    <source>
        <strain>Boxer</strain>
    </source>
</reference>
<reference key="2">
    <citation type="journal article" date="2001" name="Biochem. Biophys. Res. Commun.">
        <title>Generation and analysis of canine retinal ESTs: isolation and expression of retina-specific gene transcripts.</title>
        <authorList>
            <person name="Lin C.T."/>
            <person name="Sargan D.R."/>
        </authorList>
    </citation>
    <scope>NUCLEOTIDE SEQUENCE [MRNA] OF 145-240</scope>
    <source>
        <tissue>Retina</tissue>
    </source>
</reference>